<evidence type="ECO:0000250" key="1"/>
<evidence type="ECO:0000256" key="2">
    <source>
        <dbReference type="SAM" id="MobiDB-lite"/>
    </source>
</evidence>
<evidence type="ECO:0000305" key="3"/>
<name>CAPSD_TTVZ1</name>
<organism>
    <name type="scientific">Torque teno douroucouli virus (isolate At-TTV3)</name>
    <dbReference type="NCBI Taxonomy" id="766187"/>
    <lineage>
        <taxon>Viruses</taxon>
        <taxon>Viruses incertae sedis</taxon>
        <taxon>Anelloviridae</taxon>
        <taxon>Zetatorquevirus</taxon>
        <taxon>Zetatorquevirus aotid1</taxon>
    </lineage>
</organism>
<organismHost>
    <name type="scientific">Aotus trivirgatus</name>
    <name type="common">Three-striped night monkey</name>
    <name type="synonym">Douroucouli</name>
    <dbReference type="NCBI Taxonomy" id="9505"/>
</organismHost>
<accession>Q9DUB7</accession>
<proteinExistence type="inferred from homology"/>
<gene>
    <name type="ORF">ORF1</name>
</gene>
<feature type="chain" id="PRO_0000404278" description="Capsid protein">
    <location>
        <begin position="1"/>
        <end position="720"/>
    </location>
</feature>
<feature type="region of interest" description="Disordered" evidence="2">
    <location>
        <begin position="546"/>
        <end position="569"/>
    </location>
</feature>
<feature type="region of interest" description="Disordered" evidence="2">
    <location>
        <begin position="616"/>
        <end position="691"/>
    </location>
</feature>
<feature type="compositionally biased region" description="Acidic residues" evidence="2">
    <location>
        <begin position="652"/>
        <end position="664"/>
    </location>
</feature>
<comment type="function">
    <text evidence="1">Self-assembles to form an icosahedral capsid with a T=1 symmetry, about 30 nm in diameter, and consisting of 60 capsid proteins. The capsid encapsulates the genomic DNA. Capsid protein is involved in attachment and entry into the host cell (By similarity).</text>
</comment>
<comment type="subcellular location">
    <subcellularLocation>
        <location evidence="3">Virion</location>
    </subcellularLocation>
</comment>
<comment type="similarity">
    <text evidence="3">Belongs to the anelloviridae capsid protein family.</text>
</comment>
<sequence>MVWRRRWWRRRRRPVWRRRYRRWRRRRRWRRRPRRRRRPYRRRPYRRYGRRRKVRRRRRRTLVVRQFQPPYQRRCRVSGLEPLLYFGKKEEERHFYGNRQIMKDVDQTEGGGVTDGVFSLEELYESYQEGWNHWSASNQMLPLVRYFGCKITLYRSATDSYIFWWTNRPPFQVDRQFWVGMHPYWMLRRGRKVVMLSKQLKPFAKDHVTIKIGPPALMKTKWYFARDFCKTWLLQWRACFFNPIDPYIPRGANNTTVTFYGFPGHSYPSQSLYYTWQEHLAETNVWGITNESEKTKFEALRKAWNEQATKGPVAGYKAVLQAMNAWASVAAPGPEGSNFAKGTNVALGLANLLWLIYSQYYWQNRSPSPWGLPGATLEAMKHPEAWKPYAYKYSWSHDKGKGNRFAICDWPYKDQHGEQTTPLNFDLEIKDAPLWWCVTAAYDWAIRQGKNPANWSFFVRSDYTWPRADNIILAYSSYFADNVVKNKYADPQHATGGYFTLYRAPNLIDGREAIDIIYRNGPFAPKQEESTGNATIKYRFYFKWGGTQRPPRPQPTDPCQQPRWEGPNFPPFDGRARIDNPSDQDPRSYFWPFDTRRGSLTASAVDRVKRSLDAVTEPSETRLREGEETYGLPPPEKRARWGFPSILPTENPTDEDERYLEAEADTSSSDATDGVPETPFELLQHIQRDRDKRRELRGRLARLILRLRRRQDPELQNYYP</sequence>
<reference key="1">
    <citation type="journal article" date="2000" name="Virology">
        <title>Species-specific TT viruses in humans and nonhuman primates and their phylogenetic relatedness.</title>
        <authorList>
            <person name="Okamoto H."/>
            <person name="Nishizawa T."/>
            <person name="Tawara A."/>
            <person name="Peng Y."/>
            <person name="Takahashi M."/>
            <person name="Kishimoto J."/>
            <person name="Tanaka T."/>
            <person name="Miyakawa Y."/>
            <person name="Mayumi M."/>
        </authorList>
    </citation>
    <scope>NUCLEOTIDE SEQUENCE [GENOMIC DNA]</scope>
</reference>
<keyword id="KW-0167">Capsid protein</keyword>
<keyword id="KW-1185">Reference proteome</keyword>
<keyword id="KW-1140">T=1 icosahedral capsid protein</keyword>
<keyword id="KW-0946">Virion</keyword>
<dbReference type="EMBL" id="AB041961">
    <property type="protein sequence ID" value="BAB19320.1"/>
    <property type="molecule type" value="Genomic_DNA"/>
</dbReference>
<dbReference type="RefSeq" id="YP_003587887.1">
    <property type="nucleotide sequence ID" value="NC_014087.1"/>
</dbReference>
<dbReference type="SMR" id="Q9DUB7"/>
<dbReference type="KEGG" id="vg:9086657"/>
<dbReference type="Proteomes" id="UP000007080">
    <property type="component" value="Segment"/>
</dbReference>
<dbReference type="GO" id="GO:0039615">
    <property type="term" value="C:T=1 icosahedral viral capsid"/>
    <property type="evidence" value="ECO:0007669"/>
    <property type="project" value="UniProtKB-KW"/>
</dbReference>
<dbReference type="InterPro" id="IPR004219">
    <property type="entry name" value="TTvirus_Unk"/>
</dbReference>
<dbReference type="Pfam" id="PF02956">
    <property type="entry name" value="TT_ORF1"/>
    <property type="match status" value="1"/>
</dbReference>
<protein>
    <recommendedName>
        <fullName>Capsid protein</fullName>
    </recommendedName>
</protein>